<protein>
    <recommendedName>
        <fullName evidence="1">Small ribosomal subunit protein uS17</fullName>
    </recommendedName>
    <alternativeName>
        <fullName evidence="2">30S ribosomal protein S17</fullName>
    </alternativeName>
</protein>
<accession>Q62GL4</accession>
<sequence length="90" mass="10249">MNDSVKTSLKRTLVGKVVSNKMDKTVTVLVEHRVKHPIYGKYVVRSKKYHAHDEANTYNEGDLVEIQETRPVSKTKAWAVSRLVEAARVI</sequence>
<feature type="chain" id="PRO_0000233445" description="Small ribosomal subunit protein uS17">
    <location>
        <begin position="1"/>
        <end position="90"/>
    </location>
</feature>
<proteinExistence type="inferred from homology"/>
<gene>
    <name evidence="1" type="primary">rpsQ</name>
    <name type="ordered locus">BMA2623</name>
</gene>
<reference key="1">
    <citation type="journal article" date="2004" name="Proc. Natl. Acad. Sci. U.S.A.">
        <title>Structural flexibility in the Burkholderia mallei genome.</title>
        <authorList>
            <person name="Nierman W.C."/>
            <person name="DeShazer D."/>
            <person name="Kim H.S."/>
            <person name="Tettelin H."/>
            <person name="Nelson K.E."/>
            <person name="Feldblyum T.V."/>
            <person name="Ulrich R.L."/>
            <person name="Ronning C.M."/>
            <person name="Brinkac L.M."/>
            <person name="Daugherty S.C."/>
            <person name="Davidsen T.D."/>
            <person name="DeBoy R.T."/>
            <person name="Dimitrov G."/>
            <person name="Dodson R.J."/>
            <person name="Durkin A.S."/>
            <person name="Gwinn M.L."/>
            <person name="Haft D.H."/>
            <person name="Khouri H.M."/>
            <person name="Kolonay J.F."/>
            <person name="Madupu R."/>
            <person name="Mohammoud Y."/>
            <person name="Nelson W.C."/>
            <person name="Radune D."/>
            <person name="Romero C.M."/>
            <person name="Sarria S."/>
            <person name="Selengut J."/>
            <person name="Shamblin C."/>
            <person name="Sullivan S.A."/>
            <person name="White O."/>
            <person name="Yu Y."/>
            <person name="Zafar N."/>
            <person name="Zhou L."/>
            <person name="Fraser C.M."/>
        </authorList>
    </citation>
    <scope>NUCLEOTIDE SEQUENCE [LARGE SCALE GENOMIC DNA]</scope>
    <source>
        <strain>ATCC 23344</strain>
    </source>
</reference>
<name>RS17_BURMA</name>
<comment type="function">
    <text evidence="1">One of the primary rRNA binding proteins, it binds specifically to the 5'-end of 16S ribosomal RNA.</text>
</comment>
<comment type="subunit">
    <text evidence="1">Part of the 30S ribosomal subunit.</text>
</comment>
<comment type="similarity">
    <text evidence="1">Belongs to the universal ribosomal protein uS17 family.</text>
</comment>
<keyword id="KW-1185">Reference proteome</keyword>
<keyword id="KW-0687">Ribonucleoprotein</keyword>
<keyword id="KW-0689">Ribosomal protein</keyword>
<keyword id="KW-0694">RNA-binding</keyword>
<keyword id="KW-0699">rRNA-binding</keyword>
<dbReference type="EMBL" id="CP000010">
    <property type="protein sequence ID" value="AAU47862.1"/>
    <property type="molecule type" value="Genomic_DNA"/>
</dbReference>
<dbReference type="RefSeq" id="WP_004201274.1">
    <property type="nucleotide sequence ID" value="NC_006348.1"/>
</dbReference>
<dbReference type="RefSeq" id="YP_104157.1">
    <property type="nucleotide sequence ID" value="NC_006348.1"/>
</dbReference>
<dbReference type="SMR" id="Q62GL4"/>
<dbReference type="GeneID" id="93061823"/>
<dbReference type="KEGG" id="bma:BMA2623"/>
<dbReference type="PATRIC" id="fig|243160.12.peg.2694"/>
<dbReference type="eggNOG" id="COG0186">
    <property type="taxonomic scope" value="Bacteria"/>
</dbReference>
<dbReference type="HOGENOM" id="CLU_073626_1_1_4"/>
<dbReference type="Proteomes" id="UP000006693">
    <property type="component" value="Chromosome 1"/>
</dbReference>
<dbReference type="GO" id="GO:0022627">
    <property type="term" value="C:cytosolic small ribosomal subunit"/>
    <property type="evidence" value="ECO:0007669"/>
    <property type="project" value="TreeGrafter"/>
</dbReference>
<dbReference type="GO" id="GO:0019843">
    <property type="term" value="F:rRNA binding"/>
    <property type="evidence" value="ECO:0007669"/>
    <property type="project" value="UniProtKB-UniRule"/>
</dbReference>
<dbReference type="GO" id="GO:0003735">
    <property type="term" value="F:structural constituent of ribosome"/>
    <property type="evidence" value="ECO:0007669"/>
    <property type="project" value="InterPro"/>
</dbReference>
<dbReference type="GO" id="GO:0006412">
    <property type="term" value="P:translation"/>
    <property type="evidence" value="ECO:0007669"/>
    <property type="project" value="UniProtKB-UniRule"/>
</dbReference>
<dbReference type="CDD" id="cd00364">
    <property type="entry name" value="Ribosomal_uS17"/>
    <property type="match status" value="1"/>
</dbReference>
<dbReference type="Gene3D" id="2.40.50.140">
    <property type="entry name" value="Nucleic acid-binding proteins"/>
    <property type="match status" value="1"/>
</dbReference>
<dbReference type="HAMAP" id="MF_01345_B">
    <property type="entry name" value="Ribosomal_uS17_B"/>
    <property type="match status" value="1"/>
</dbReference>
<dbReference type="InterPro" id="IPR012340">
    <property type="entry name" value="NA-bd_OB-fold"/>
</dbReference>
<dbReference type="InterPro" id="IPR000266">
    <property type="entry name" value="Ribosomal_uS17"/>
</dbReference>
<dbReference type="InterPro" id="IPR019984">
    <property type="entry name" value="Ribosomal_uS17_bact/chlr"/>
</dbReference>
<dbReference type="InterPro" id="IPR019979">
    <property type="entry name" value="Ribosomal_uS17_CS"/>
</dbReference>
<dbReference type="NCBIfam" id="NF004123">
    <property type="entry name" value="PRK05610.1"/>
    <property type="match status" value="1"/>
</dbReference>
<dbReference type="NCBIfam" id="TIGR03635">
    <property type="entry name" value="uS17_bact"/>
    <property type="match status" value="1"/>
</dbReference>
<dbReference type="PANTHER" id="PTHR10744">
    <property type="entry name" value="40S RIBOSOMAL PROTEIN S11 FAMILY MEMBER"/>
    <property type="match status" value="1"/>
</dbReference>
<dbReference type="PANTHER" id="PTHR10744:SF1">
    <property type="entry name" value="SMALL RIBOSOMAL SUBUNIT PROTEIN US17M"/>
    <property type="match status" value="1"/>
</dbReference>
<dbReference type="Pfam" id="PF00366">
    <property type="entry name" value="Ribosomal_S17"/>
    <property type="match status" value="1"/>
</dbReference>
<dbReference type="PRINTS" id="PR00973">
    <property type="entry name" value="RIBOSOMALS17"/>
</dbReference>
<dbReference type="SUPFAM" id="SSF50249">
    <property type="entry name" value="Nucleic acid-binding proteins"/>
    <property type="match status" value="1"/>
</dbReference>
<dbReference type="PROSITE" id="PS00056">
    <property type="entry name" value="RIBOSOMAL_S17"/>
    <property type="match status" value="1"/>
</dbReference>
<evidence type="ECO:0000255" key="1">
    <source>
        <dbReference type="HAMAP-Rule" id="MF_01345"/>
    </source>
</evidence>
<evidence type="ECO:0000305" key="2"/>
<organism>
    <name type="scientific">Burkholderia mallei (strain ATCC 23344)</name>
    <dbReference type="NCBI Taxonomy" id="243160"/>
    <lineage>
        <taxon>Bacteria</taxon>
        <taxon>Pseudomonadati</taxon>
        <taxon>Pseudomonadota</taxon>
        <taxon>Betaproteobacteria</taxon>
        <taxon>Burkholderiales</taxon>
        <taxon>Burkholderiaceae</taxon>
        <taxon>Burkholderia</taxon>
        <taxon>pseudomallei group</taxon>
    </lineage>
</organism>